<dbReference type="EMBL" id="BX571857">
    <property type="protein sequence ID" value="CAG42267.1"/>
    <property type="molecule type" value="Genomic_DNA"/>
</dbReference>
<dbReference type="SMR" id="Q6GBV3"/>
<dbReference type="KEGG" id="sas:SAS0492"/>
<dbReference type="HOGENOM" id="CLU_190949_0_1_9"/>
<dbReference type="GO" id="GO:0005737">
    <property type="term" value="C:cytoplasm"/>
    <property type="evidence" value="ECO:0007669"/>
    <property type="project" value="UniProtKB-ARBA"/>
</dbReference>
<dbReference type="GO" id="GO:1990904">
    <property type="term" value="C:ribonucleoprotein complex"/>
    <property type="evidence" value="ECO:0007669"/>
    <property type="project" value="UniProtKB-KW"/>
</dbReference>
<dbReference type="GO" id="GO:0005840">
    <property type="term" value="C:ribosome"/>
    <property type="evidence" value="ECO:0007669"/>
    <property type="project" value="UniProtKB-KW"/>
</dbReference>
<dbReference type="GO" id="GO:0003735">
    <property type="term" value="F:structural constituent of ribosome"/>
    <property type="evidence" value="ECO:0007669"/>
    <property type="project" value="InterPro"/>
</dbReference>
<dbReference type="GO" id="GO:0006412">
    <property type="term" value="P:translation"/>
    <property type="evidence" value="ECO:0007669"/>
    <property type="project" value="UniProtKB-UniRule"/>
</dbReference>
<dbReference type="Gene3D" id="2.20.28.120">
    <property type="entry name" value="Ribosomal protein L33"/>
    <property type="match status" value="1"/>
</dbReference>
<dbReference type="HAMAP" id="MF_00294">
    <property type="entry name" value="Ribosomal_bL33"/>
    <property type="match status" value="1"/>
</dbReference>
<dbReference type="InterPro" id="IPR001705">
    <property type="entry name" value="Ribosomal_bL33"/>
</dbReference>
<dbReference type="InterPro" id="IPR018264">
    <property type="entry name" value="Ribosomal_bL33_CS"/>
</dbReference>
<dbReference type="InterPro" id="IPR038584">
    <property type="entry name" value="Ribosomal_bL33_sf"/>
</dbReference>
<dbReference type="InterPro" id="IPR011332">
    <property type="entry name" value="Ribosomal_zn-bd"/>
</dbReference>
<dbReference type="NCBIfam" id="NF001764">
    <property type="entry name" value="PRK00504.1"/>
    <property type="match status" value="1"/>
</dbReference>
<dbReference type="NCBIfam" id="TIGR01023">
    <property type="entry name" value="rpmG_bact"/>
    <property type="match status" value="1"/>
</dbReference>
<dbReference type="Pfam" id="PF00471">
    <property type="entry name" value="Ribosomal_L33"/>
    <property type="match status" value="1"/>
</dbReference>
<dbReference type="SUPFAM" id="SSF57829">
    <property type="entry name" value="Zn-binding ribosomal proteins"/>
    <property type="match status" value="1"/>
</dbReference>
<dbReference type="PROSITE" id="PS00582">
    <property type="entry name" value="RIBOSOMAL_L33"/>
    <property type="match status" value="1"/>
</dbReference>
<evidence type="ECO:0000255" key="1">
    <source>
        <dbReference type="HAMAP-Rule" id="MF_00294"/>
    </source>
</evidence>
<organism>
    <name type="scientific">Staphylococcus aureus (strain MSSA476)</name>
    <dbReference type="NCBI Taxonomy" id="282459"/>
    <lineage>
        <taxon>Bacteria</taxon>
        <taxon>Bacillati</taxon>
        <taxon>Bacillota</taxon>
        <taxon>Bacilli</taxon>
        <taxon>Bacillales</taxon>
        <taxon>Staphylococcaceae</taxon>
        <taxon>Staphylococcus</taxon>
    </lineage>
</organism>
<comment type="similarity">
    <text evidence="1">Belongs to the bacterial ribosomal protein bL33 family.</text>
</comment>
<accession>Q6GBV3</accession>
<reference key="1">
    <citation type="journal article" date="2004" name="Proc. Natl. Acad. Sci. U.S.A.">
        <title>Complete genomes of two clinical Staphylococcus aureus strains: evidence for the rapid evolution of virulence and drug resistance.</title>
        <authorList>
            <person name="Holden M.T.G."/>
            <person name="Feil E.J."/>
            <person name="Lindsay J.A."/>
            <person name="Peacock S.J."/>
            <person name="Day N.P.J."/>
            <person name="Enright M.C."/>
            <person name="Foster T.J."/>
            <person name="Moore C.E."/>
            <person name="Hurst L."/>
            <person name="Atkin R."/>
            <person name="Barron A."/>
            <person name="Bason N."/>
            <person name="Bentley S.D."/>
            <person name="Chillingworth C."/>
            <person name="Chillingworth T."/>
            <person name="Churcher C."/>
            <person name="Clark L."/>
            <person name="Corton C."/>
            <person name="Cronin A."/>
            <person name="Doggett J."/>
            <person name="Dowd L."/>
            <person name="Feltwell T."/>
            <person name="Hance Z."/>
            <person name="Harris B."/>
            <person name="Hauser H."/>
            <person name="Holroyd S."/>
            <person name="Jagels K."/>
            <person name="James K.D."/>
            <person name="Lennard N."/>
            <person name="Line A."/>
            <person name="Mayes R."/>
            <person name="Moule S."/>
            <person name="Mungall K."/>
            <person name="Ormond D."/>
            <person name="Quail M.A."/>
            <person name="Rabbinowitsch E."/>
            <person name="Rutherford K.M."/>
            <person name="Sanders M."/>
            <person name="Sharp S."/>
            <person name="Simmonds M."/>
            <person name="Stevens K."/>
            <person name="Whitehead S."/>
            <person name="Barrell B.G."/>
            <person name="Spratt B.G."/>
            <person name="Parkhill J."/>
        </authorList>
    </citation>
    <scope>NUCLEOTIDE SEQUENCE [LARGE SCALE GENOMIC DNA]</scope>
    <source>
        <strain>MSSA476</strain>
    </source>
</reference>
<gene>
    <name evidence="1" type="primary">rpmG3</name>
    <name type="ordered locus">SAS0492</name>
</gene>
<protein>
    <recommendedName>
        <fullName evidence="1">Large ribosomal subunit protein bL33C</fullName>
    </recommendedName>
    <alternativeName>
        <fullName evidence="1">50S ribosomal protein L33 3</fullName>
    </alternativeName>
</protein>
<proteinExistence type="inferred from homology"/>
<name>RL333_STAAS</name>
<keyword id="KW-0687">Ribonucleoprotein</keyword>
<keyword id="KW-0689">Ribosomal protein</keyword>
<feature type="chain" id="PRO_0000170224" description="Large ribosomal subunit protein bL33C">
    <location>
        <begin position="1"/>
        <end position="47"/>
    </location>
</feature>
<sequence>MRKIPLNCEACGNRNYNVPKQEGSATRLTLKKYCPKCNAHTIHKESK</sequence>